<proteinExistence type="inferred from homology"/>
<gene>
    <name type="primary">argG</name>
    <name type="ordered locus">bll0522</name>
</gene>
<keyword id="KW-0028">Amino-acid biosynthesis</keyword>
<keyword id="KW-0055">Arginine biosynthesis</keyword>
<keyword id="KW-0067">ATP-binding</keyword>
<keyword id="KW-0963">Cytoplasm</keyword>
<keyword id="KW-0436">Ligase</keyword>
<keyword id="KW-0547">Nucleotide-binding</keyword>
<keyword id="KW-1185">Reference proteome</keyword>
<protein>
    <recommendedName>
        <fullName>Argininosuccinate synthase</fullName>
        <ecNumber>6.3.4.5</ecNumber>
    </recommendedName>
    <alternativeName>
        <fullName>Citrulline--aspartate ligase</fullName>
    </alternativeName>
</protein>
<dbReference type="EC" id="6.3.4.5"/>
<dbReference type="EMBL" id="BA000040">
    <property type="protein sequence ID" value="BAC45787.1"/>
    <property type="molecule type" value="Genomic_DNA"/>
</dbReference>
<dbReference type="RefSeq" id="NP_767162.1">
    <property type="nucleotide sequence ID" value="NC_004463.1"/>
</dbReference>
<dbReference type="RefSeq" id="WP_011083353.1">
    <property type="nucleotide sequence ID" value="NC_004463.1"/>
</dbReference>
<dbReference type="SMR" id="P59607"/>
<dbReference type="FunCoup" id="P59607">
    <property type="interactions" value="632"/>
</dbReference>
<dbReference type="STRING" id="224911.AAV28_41875"/>
<dbReference type="EnsemblBacteria" id="BAC45787">
    <property type="protein sequence ID" value="BAC45787"/>
    <property type="gene ID" value="BAC45787"/>
</dbReference>
<dbReference type="GeneID" id="46495666"/>
<dbReference type="KEGG" id="bja:bll0522"/>
<dbReference type="PATRIC" id="fig|224911.44.peg.9062"/>
<dbReference type="eggNOG" id="COG0137">
    <property type="taxonomic scope" value="Bacteria"/>
</dbReference>
<dbReference type="HOGENOM" id="CLU_032784_4_1_5"/>
<dbReference type="InParanoid" id="P59607"/>
<dbReference type="OrthoDB" id="9801641at2"/>
<dbReference type="PhylomeDB" id="P59607"/>
<dbReference type="UniPathway" id="UPA00068">
    <property type="reaction ID" value="UER00113"/>
</dbReference>
<dbReference type="Proteomes" id="UP000002526">
    <property type="component" value="Chromosome"/>
</dbReference>
<dbReference type="GO" id="GO:0005737">
    <property type="term" value="C:cytoplasm"/>
    <property type="evidence" value="ECO:0000318"/>
    <property type="project" value="GO_Central"/>
</dbReference>
<dbReference type="GO" id="GO:0004055">
    <property type="term" value="F:argininosuccinate synthase activity"/>
    <property type="evidence" value="ECO:0000318"/>
    <property type="project" value="GO_Central"/>
</dbReference>
<dbReference type="GO" id="GO:0005524">
    <property type="term" value="F:ATP binding"/>
    <property type="evidence" value="ECO:0007669"/>
    <property type="project" value="UniProtKB-UniRule"/>
</dbReference>
<dbReference type="GO" id="GO:0042803">
    <property type="term" value="F:protein homodimerization activity"/>
    <property type="evidence" value="ECO:0007669"/>
    <property type="project" value="InterPro"/>
</dbReference>
<dbReference type="GO" id="GO:0000053">
    <property type="term" value="P:argininosuccinate metabolic process"/>
    <property type="evidence" value="ECO:0000318"/>
    <property type="project" value="GO_Central"/>
</dbReference>
<dbReference type="GO" id="GO:0006526">
    <property type="term" value="P:L-arginine biosynthetic process"/>
    <property type="evidence" value="ECO:0000318"/>
    <property type="project" value="GO_Central"/>
</dbReference>
<dbReference type="GO" id="GO:0000050">
    <property type="term" value="P:urea cycle"/>
    <property type="evidence" value="ECO:0000318"/>
    <property type="project" value="GO_Central"/>
</dbReference>
<dbReference type="CDD" id="cd01999">
    <property type="entry name" value="ASS"/>
    <property type="match status" value="1"/>
</dbReference>
<dbReference type="FunFam" id="1.10.287.400:FF:000001">
    <property type="entry name" value="Argininosuccinate synthase"/>
    <property type="match status" value="1"/>
</dbReference>
<dbReference type="Gene3D" id="1.10.287.400">
    <property type="match status" value="1"/>
</dbReference>
<dbReference type="Gene3D" id="3.90.1260.10">
    <property type="entry name" value="Argininosuccinate synthetase, chain A, domain 2"/>
    <property type="match status" value="1"/>
</dbReference>
<dbReference type="Gene3D" id="3.40.50.620">
    <property type="entry name" value="HUPs"/>
    <property type="match status" value="1"/>
</dbReference>
<dbReference type="HAMAP" id="MF_00581">
    <property type="entry name" value="Arg_succ_synth_type2"/>
    <property type="match status" value="1"/>
</dbReference>
<dbReference type="InterPro" id="IPR023437">
    <property type="entry name" value="Arg_succ_synth_type2_subfam"/>
</dbReference>
<dbReference type="InterPro" id="IPR048268">
    <property type="entry name" value="Arginosuc_syn_C"/>
</dbReference>
<dbReference type="InterPro" id="IPR048267">
    <property type="entry name" value="Arginosuc_syn_N"/>
</dbReference>
<dbReference type="InterPro" id="IPR001518">
    <property type="entry name" value="Arginosuc_synth"/>
</dbReference>
<dbReference type="InterPro" id="IPR018223">
    <property type="entry name" value="Arginosuc_synth_CS"/>
</dbReference>
<dbReference type="InterPro" id="IPR023434">
    <property type="entry name" value="Arginosuc_synth_type_1_subfam"/>
</dbReference>
<dbReference type="InterPro" id="IPR024074">
    <property type="entry name" value="AS_cat/multimer_dom_body"/>
</dbReference>
<dbReference type="InterPro" id="IPR024073">
    <property type="entry name" value="AS_multimer_C_tail"/>
</dbReference>
<dbReference type="InterPro" id="IPR014729">
    <property type="entry name" value="Rossmann-like_a/b/a_fold"/>
</dbReference>
<dbReference type="NCBIfam" id="TIGR00032">
    <property type="entry name" value="argG"/>
    <property type="match status" value="1"/>
</dbReference>
<dbReference type="NCBIfam" id="NF003779">
    <property type="entry name" value="PRK05370.1"/>
    <property type="match status" value="1"/>
</dbReference>
<dbReference type="PANTHER" id="PTHR11587">
    <property type="entry name" value="ARGININOSUCCINATE SYNTHASE"/>
    <property type="match status" value="1"/>
</dbReference>
<dbReference type="PANTHER" id="PTHR11587:SF2">
    <property type="entry name" value="ARGININOSUCCINATE SYNTHASE"/>
    <property type="match status" value="1"/>
</dbReference>
<dbReference type="Pfam" id="PF20979">
    <property type="entry name" value="Arginosuc_syn_C"/>
    <property type="match status" value="1"/>
</dbReference>
<dbReference type="Pfam" id="PF00764">
    <property type="entry name" value="Arginosuc_synth"/>
    <property type="match status" value="1"/>
</dbReference>
<dbReference type="SUPFAM" id="SSF52402">
    <property type="entry name" value="Adenine nucleotide alpha hydrolases-like"/>
    <property type="match status" value="1"/>
</dbReference>
<dbReference type="SUPFAM" id="SSF69864">
    <property type="entry name" value="Argininosuccinate synthetase, C-terminal domain"/>
    <property type="match status" value="1"/>
</dbReference>
<dbReference type="PROSITE" id="PS00564">
    <property type="entry name" value="ARGININOSUCCIN_SYN_1"/>
    <property type="match status" value="1"/>
</dbReference>
<dbReference type="PROSITE" id="PS00565">
    <property type="entry name" value="ARGININOSUCCIN_SYN_2"/>
    <property type="match status" value="1"/>
</dbReference>
<sequence length="445" mass="49231">MTTILKSLPKGEKVGIAFSGGLDTSAALLWMKQKGARCYAYTANLGQPDEADYNEIPRKAQEFGAEKAVLVDCRTQLVHEGIAAIQSGAFHISTGGITYFNTTPLGRAVTGTMLVAAMKEDGVNIWGDGSTFKGNDIERFYRYGLLTNPSLRIYKPWLDQQFIDELGGRAEMSAFMTAQGFAYKMSAEKAYSTDSNLLGATHEAKDLESLDSGIKIVNPIMGVPFWREDCNVKAEKVVVRFEEGQPTALNGQTFTDPVALFLEANAIGGRHGLGMSDQIENRIIEAKSRGIYEAPGMALLHIAYERLVTGIHNEDTIEQYRISGMRLGRLLYQGRWFDSQALMLRETAQRWVARAVTGEVTLELRRGNDYSILNTESPNLTYAPERLSMEKVEDAAFTPADRIGQLTMRNLDIADTRTKLKLYTDTGLLSGSEGSQIFRLENDKG</sequence>
<organism>
    <name type="scientific">Bradyrhizobium diazoefficiens (strain JCM 10833 / BCRC 13528 / IAM 13628 / NBRC 14792 / USDA 110)</name>
    <dbReference type="NCBI Taxonomy" id="224911"/>
    <lineage>
        <taxon>Bacteria</taxon>
        <taxon>Pseudomonadati</taxon>
        <taxon>Pseudomonadota</taxon>
        <taxon>Alphaproteobacteria</taxon>
        <taxon>Hyphomicrobiales</taxon>
        <taxon>Nitrobacteraceae</taxon>
        <taxon>Bradyrhizobium</taxon>
    </lineage>
</organism>
<comment type="catalytic activity">
    <reaction>
        <text>L-citrulline + L-aspartate + ATP = 2-(N(omega)-L-arginino)succinate + AMP + diphosphate + H(+)</text>
        <dbReference type="Rhea" id="RHEA:10932"/>
        <dbReference type="ChEBI" id="CHEBI:15378"/>
        <dbReference type="ChEBI" id="CHEBI:29991"/>
        <dbReference type="ChEBI" id="CHEBI:30616"/>
        <dbReference type="ChEBI" id="CHEBI:33019"/>
        <dbReference type="ChEBI" id="CHEBI:57472"/>
        <dbReference type="ChEBI" id="CHEBI:57743"/>
        <dbReference type="ChEBI" id="CHEBI:456215"/>
        <dbReference type="EC" id="6.3.4.5"/>
    </reaction>
</comment>
<comment type="pathway">
    <text>Amino-acid biosynthesis; L-arginine biosynthesis; L-arginine from L-ornithine and carbamoyl phosphate: step 2/3.</text>
</comment>
<comment type="subunit">
    <text evidence="1">Homotetramer.</text>
</comment>
<comment type="subcellular location">
    <subcellularLocation>
        <location evidence="1">Cytoplasm</location>
    </subcellularLocation>
</comment>
<comment type="similarity">
    <text evidence="2">Belongs to the argininosuccinate synthase family. Type 2 subfamily.</text>
</comment>
<accession>P59607</accession>
<feature type="chain" id="PRO_0000148693" description="Argininosuccinate synthase">
    <location>
        <begin position="1"/>
        <end position="445"/>
    </location>
</feature>
<feature type="binding site" evidence="1">
    <location>
        <begin position="17"/>
        <end position="25"/>
    </location>
    <ligand>
        <name>ATP</name>
        <dbReference type="ChEBI" id="CHEBI:30616"/>
    </ligand>
</feature>
<feature type="binding site" evidence="1">
    <location>
        <position position="43"/>
    </location>
    <ligand>
        <name>ATP</name>
        <dbReference type="ChEBI" id="CHEBI:30616"/>
    </ligand>
</feature>
<feature type="binding site" evidence="1">
    <location>
        <position position="99"/>
    </location>
    <ligand>
        <name>L-citrulline</name>
        <dbReference type="ChEBI" id="CHEBI:57743"/>
    </ligand>
</feature>
<feature type="binding site" evidence="1">
    <location>
        <position position="129"/>
    </location>
    <ligand>
        <name>ATP</name>
        <dbReference type="ChEBI" id="CHEBI:30616"/>
    </ligand>
</feature>
<feature type="binding site" evidence="1">
    <location>
        <position position="131"/>
    </location>
    <ligand>
        <name>ATP</name>
        <dbReference type="ChEBI" id="CHEBI:30616"/>
    </ligand>
</feature>
<feature type="binding site" evidence="1">
    <location>
        <position position="131"/>
    </location>
    <ligand>
        <name>L-aspartate</name>
        <dbReference type="ChEBI" id="CHEBI:29991"/>
    </ligand>
</feature>
<feature type="binding site" evidence="1">
    <location>
        <position position="135"/>
    </location>
    <ligand>
        <name>L-aspartate</name>
        <dbReference type="ChEBI" id="CHEBI:29991"/>
    </ligand>
</feature>
<feature type="binding site" evidence="1">
    <location>
        <position position="135"/>
    </location>
    <ligand>
        <name>L-citrulline</name>
        <dbReference type="ChEBI" id="CHEBI:57743"/>
    </ligand>
</feature>
<feature type="binding site" evidence="1">
    <location>
        <position position="136"/>
    </location>
    <ligand>
        <name>ATP</name>
        <dbReference type="ChEBI" id="CHEBI:30616"/>
    </ligand>
</feature>
<feature type="binding site" evidence="1">
    <location>
        <position position="136"/>
    </location>
    <ligand>
        <name>L-aspartate</name>
        <dbReference type="ChEBI" id="CHEBI:29991"/>
    </ligand>
</feature>
<feature type="binding site" evidence="1">
    <location>
        <position position="139"/>
    </location>
    <ligand>
        <name>L-citrulline</name>
        <dbReference type="ChEBI" id="CHEBI:57743"/>
    </ligand>
</feature>
<feature type="binding site" evidence="1">
    <location>
        <position position="192"/>
    </location>
    <ligand>
        <name>L-citrulline</name>
        <dbReference type="ChEBI" id="CHEBI:57743"/>
    </ligand>
</feature>
<feature type="binding site" evidence="1">
    <location>
        <position position="194"/>
    </location>
    <ligand>
        <name>ATP</name>
        <dbReference type="ChEBI" id="CHEBI:30616"/>
    </ligand>
</feature>
<feature type="binding site" evidence="1">
    <location>
        <position position="201"/>
    </location>
    <ligand>
        <name>L-citrulline</name>
        <dbReference type="ChEBI" id="CHEBI:57743"/>
    </ligand>
</feature>
<feature type="binding site" evidence="1">
    <location>
        <position position="203"/>
    </location>
    <ligand>
        <name>L-citrulline</name>
        <dbReference type="ChEBI" id="CHEBI:57743"/>
    </ligand>
</feature>
<feature type="binding site" evidence="1">
    <location>
        <position position="280"/>
    </location>
    <ligand>
        <name>L-citrulline</name>
        <dbReference type="ChEBI" id="CHEBI:57743"/>
    </ligand>
</feature>
<name>ASSY_BRADU</name>
<evidence type="ECO:0000250" key="1"/>
<evidence type="ECO:0000305" key="2"/>
<reference key="1">
    <citation type="journal article" date="2002" name="DNA Res.">
        <title>Complete genomic sequence of nitrogen-fixing symbiotic bacterium Bradyrhizobium japonicum USDA110.</title>
        <authorList>
            <person name="Kaneko T."/>
            <person name="Nakamura Y."/>
            <person name="Sato S."/>
            <person name="Minamisawa K."/>
            <person name="Uchiumi T."/>
            <person name="Sasamoto S."/>
            <person name="Watanabe A."/>
            <person name="Idesawa K."/>
            <person name="Iriguchi M."/>
            <person name="Kawashima K."/>
            <person name="Kohara M."/>
            <person name="Matsumoto M."/>
            <person name="Shimpo S."/>
            <person name="Tsuruoka H."/>
            <person name="Wada T."/>
            <person name="Yamada M."/>
            <person name="Tabata S."/>
        </authorList>
    </citation>
    <scope>NUCLEOTIDE SEQUENCE [LARGE SCALE GENOMIC DNA]</scope>
    <source>
        <strain>JCM 10833 / BCRC 13528 / IAM 13628 / NBRC 14792 / USDA 110</strain>
    </source>
</reference>